<feature type="chain" id="PRO_0000345325" description="tRNA uridine 5-carboxymethylaminomethyl modification enzyme MnmG">
    <location>
        <begin position="1"/>
        <end position="679"/>
    </location>
</feature>
<feature type="binding site" evidence="1">
    <location>
        <begin position="13"/>
        <end position="18"/>
    </location>
    <ligand>
        <name>FAD</name>
        <dbReference type="ChEBI" id="CHEBI:57692"/>
    </ligand>
</feature>
<feature type="binding site" evidence="1">
    <location>
        <begin position="280"/>
        <end position="294"/>
    </location>
    <ligand>
        <name>NAD(+)</name>
        <dbReference type="ChEBI" id="CHEBI:57540"/>
    </ligand>
</feature>
<evidence type="ECO:0000255" key="1">
    <source>
        <dbReference type="HAMAP-Rule" id="MF_00129"/>
    </source>
</evidence>
<gene>
    <name evidence="1" type="primary">mnmG</name>
    <name evidence="1" type="synonym">gidA</name>
    <name type="ordered locus">Rfer_0049</name>
</gene>
<dbReference type="EMBL" id="CP000267">
    <property type="protein sequence ID" value="ABD67811.1"/>
    <property type="molecule type" value="Genomic_DNA"/>
</dbReference>
<dbReference type="RefSeq" id="WP_011462384.1">
    <property type="nucleotide sequence ID" value="NC_007908.1"/>
</dbReference>
<dbReference type="SMR" id="Q21QL5"/>
<dbReference type="STRING" id="338969.Rfer_0049"/>
<dbReference type="KEGG" id="rfr:Rfer_0049"/>
<dbReference type="eggNOG" id="COG0445">
    <property type="taxonomic scope" value="Bacteria"/>
</dbReference>
<dbReference type="HOGENOM" id="CLU_007831_2_2_4"/>
<dbReference type="OrthoDB" id="9815560at2"/>
<dbReference type="Proteomes" id="UP000008332">
    <property type="component" value="Chromosome"/>
</dbReference>
<dbReference type="GO" id="GO:0005829">
    <property type="term" value="C:cytosol"/>
    <property type="evidence" value="ECO:0007669"/>
    <property type="project" value="TreeGrafter"/>
</dbReference>
<dbReference type="GO" id="GO:0050660">
    <property type="term" value="F:flavin adenine dinucleotide binding"/>
    <property type="evidence" value="ECO:0007669"/>
    <property type="project" value="UniProtKB-UniRule"/>
</dbReference>
<dbReference type="GO" id="GO:0030488">
    <property type="term" value="P:tRNA methylation"/>
    <property type="evidence" value="ECO:0007669"/>
    <property type="project" value="TreeGrafter"/>
</dbReference>
<dbReference type="GO" id="GO:0002098">
    <property type="term" value="P:tRNA wobble uridine modification"/>
    <property type="evidence" value="ECO:0007669"/>
    <property type="project" value="InterPro"/>
</dbReference>
<dbReference type="FunFam" id="1.10.10.1800:FF:000001">
    <property type="entry name" value="tRNA uridine 5-carboxymethylaminomethyl modification enzyme MnmG"/>
    <property type="match status" value="1"/>
</dbReference>
<dbReference type="FunFam" id="1.10.150.570:FF:000001">
    <property type="entry name" value="tRNA uridine 5-carboxymethylaminomethyl modification enzyme MnmG"/>
    <property type="match status" value="1"/>
</dbReference>
<dbReference type="FunFam" id="3.50.50.60:FF:000002">
    <property type="entry name" value="tRNA uridine 5-carboxymethylaminomethyl modification enzyme MnmG"/>
    <property type="match status" value="1"/>
</dbReference>
<dbReference type="FunFam" id="3.50.50.60:FF:000010">
    <property type="entry name" value="tRNA uridine 5-carboxymethylaminomethyl modification enzyme MnmG"/>
    <property type="match status" value="1"/>
</dbReference>
<dbReference type="Gene3D" id="3.50.50.60">
    <property type="entry name" value="FAD/NAD(P)-binding domain"/>
    <property type="match status" value="2"/>
</dbReference>
<dbReference type="Gene3D" id="1.10.150.570">
    <property type="entry name" value="GidA associated domain, C-terminal subdomain"/>
    <property type="match status" value="1"/>
</dbReference>
<dbReference type="Gene3D" id="1.10.10.1800">
    <property type="entry name" value="tRNA uridine 5-carboxymethylaminomethyl modification enzyme MnmG/GidA"/>
    <property type="match status" value="1"/>
</dbReference>
<dbReference type="HAMAP" id="MF_00129">
    <property type="entry name" value="MnmG_GidA"/>
    <property type="match status" value="1"/>
</dbReference>
<dbReference type="InterPro" id="IPR036188">
    <property type="entry name" value="FAD/NAD-bd_sf"/>
</dbReference>
<dbReference type="InterPro" id="IPR049312">
    <property type="entry name" value="GIDA_C_N"/>
</dbReference>
<dbReference type="InterPro" id="IPR004416">
    <property type="entry name" value="MnmG"/>
</dbReference>
<dbReference type="InterPro" id="IPR002218">
    <property type="entry name" value="MnmG-rel"/>
</dbReference>
<dbReference type="InterPro" id="IPR020595">
    <property type="entry name" value="MnmG-rel_CS"/>
</dbReference>
<dbReference type="InterPro" id="IPR026904">
    <property type="entry name" value="MnmG_C"/>
</dbReference>
<dbReference type="InterPro" id="IPR047001">
    <property type="entry name" value="MnmG_C_subdom"/>
</dbReference>
<dbReference type="InterPro" id="IPR044920">
    <property type="entry name" value="MnmG_C_subdom_sf"/>
</dbReference>
<dbReference type="InterPro" id="IPR040131">
    <property type="entry name" value="MnmG_N"/>
</dbReference>
<dbReference type="NCBIfam" id="TIGR00136">
    <property type="entry name" value="mnmG_gidA"/>
    <property type="match status" value="1"/>
</dbReference>
<dbReference type="PANTHER" id="PTHR11806">
    <property type="entry name" value="GLUCOSE INHIBITED DIVISION PROTEIN A"/>
    <property type="match status" value="1"/>
</dbReference>
<dbReference type="PANTHER" id="PTHR11806:SF0">
    <property type="entry name" value="PROTEIN MTO1 HOMOLOG, MITOCHONDRIAL"/>
    <property type="match status" value="1"/>
</dbReference>
<dbReference type="Pfam" id="PF01134">
    <property type="entry name" value="GIDA"/>
    <property type="match status" value="1"/>
</dbReference>
<dbReference type="Pfam" id="PF21680">
    <property type="entry name" value="GIDA_C_1st"/>
    <property type="match status" value="1"/>
</dbReference>
<dbReference type="Pfam" id="PF13932">
    <property type="entry name" value="SAM_GIDA_C"/>
    <property type="match status" value="1"/>
</dbReference>
<dbReference type="SMART" id="SM01228">
    <property type="entry name" value="GIDA_assoc_3"/>
    <property type="match status" value="1"/>
</dbReference>
<dbReference type="SUPFAM" id="SSF51905">
    <property type="entry name" value="FAD/NAD(P)-binding domain"/>
    <property type="match status" value="1"/>
</dbReference>
<dbReference type="PROSITE" id="PS01280">
    <property type="entry name" value="GIDA_1"/>
    <property type="match status" value="1"/>
</dbReference>
<dbReference type="PROSITE" id="PS01281">
    <property type="entry name" value="GIDA_2"/>
    <property type="match status" value="1"/>
</dbReference>
<reference key="1">
    <citation type="submission" date="2006-02" db="EMBL/GenBank/DDBJ databases">
        <title>Complete sequence of chromosome of Rhodoferax ferrireducens DSM 15236.</title>
        <authorList>
            <person name="Copeland A."/>
            <person name="Lucas S."/>
            <person name="Lapidus A."/>
            <person name="Barry K."/>
            <person name="Detter J.C."/>
            <person name="Glavina del Rio T."/>
            <person name="Hammon N."/>
            <person name="Israni S."/>
            <person name="Pitluck S."/>
            <person name="Brettin T."/>
            <person name="Bruce D."/>
            <person name="Han C."/>
            <person name="Tapia R."/>
            <person name="Gilna P."/>
            <person name="Kiss H."/>
            <person name="Schmutz J."/>
            <person name="Larimer F."/>
            <person name="Land M."/>
            <person name="Kyrpides N."/>
            <person name="Ivanova N."/>
            <person name="Richardson P."/>
        </authorList>
    </citation>
    <scope>NUCLEOTIDE SEQUENCE [LARGE SCALE GENOMIC DNA]</scope>
    <source>
        <strain>ATCC BAA-621 / DSM 15236 / T118</strain>
    </source>
</reference>
<organism>
    <name type="scientific">Albidiferax ferrireducens (strain ATCC BAA-621 / DSM 15236 / T118)</name>
    <name type="common">Rhodoferax ferrireducens</name>
    <dbReference type="NCBI Taxonomy" id="338969"/>
    <lineage>
        <taxon>Bacteria</taxon>
        <taxon>Pseudomonadati</taxon>
        <taxon>Pseudomonadota</taxon>
        <taxon>Betaproteobacteria</taxon>
        <taxon>Burkholderiales</taxon>
        <taxon>Comamonadaceae</taxon>
        <taxon>Rhodoferax</taxon>
    </lineage>
</organism>
<keyword id="KW-0963">Cytoplasm</keyword>
<keyword id="KW-0274">FAD</keyword>
<keyword id="KW-0285">Flavoprotein</keyword>
<keyword id="KW-0520">NAD</keyword>
<keyword id="KW-1185">Reference proteome</keyword>
<keyword id="KW-0819">tRNA processing</keyword>
<sequence>MLYPQHFDVIVVGGGHAGTEAALAAARMGCKTLLLSHNIETLGQMSCNPSIGGIGKGHLVKEVDALGGAMAAATDEGGIQFRILNSSKGPAVRATRAQADRLLYKAAIRRRLENQPNLWLFQQAVDDLMVEGDRVVGAVTQAGIKFRAKTVVLTAGTFLDGKIHVGLNNYAAGRAGDPPAVRLSARLKELKLPQGRLKTGTPPRLDGRSIDFSKCGEQPGDGMPGGMSPVMPVFSFMGRVEQHPPQMSCWTTHTNERTHEIIRSGFDRSPMFTGKIEGVGPRYCPSVEDKINRFADKDSHQIFLEPEGLTTNEYYPNGISTSLPFDIQYALVRSMAGLENAHILRPGYAIEYDYFDPQQLKSSFETRAIGGLFFAGQINGTTGYEEAAAQGLFAGVNAALQAGAQTSWQQETWVPGRDEAYLGVLVDDLITKGVTEPYRMFTSRAEFRLQLREDNADMRLTETGRRLGLVDDARWEAFSRKREAVSRETERLRSLWVSPKNLTATESERVLGKSIEHEYSLADLLRRPDVNYANLMSLEGGKYASAELNIPVSRETPAVPLPEAVFAAVVIEQVEIVAKYAGYIDRQIEEVGRAAHYENLKLPLELDYLQVSALSFEARQKLSKHRPETLGQASRLSGITPAAISLLLVHLKKSNFKGFAAAGKVTAPSESGDVQQGVI</sequence>
<protein>
    <recommendedName>
        <fullName evidence="1">tRNA uridine 5-carboxymethylaminomethyl modification enzyme MnmG</fullName>
    </recommendedName>
    <alternativeName>
        <fullName evidence="1">Glucose-inhibited division protein A</fullName>
    </alternativeName>
</protein>
<accession>Q21QL5</accession>
<proteinExistence type="inferred from homology"/>
<comment type="function">
    <text evidence="1">NAD-binding protein involved in the addition of a carboxymethylaminomethyl (cmnm) group at the wobble position (U34) of certain tRNAs, forming tRNA-cmnm(5)s(2)U34.</text>
</comment>
<comment type="cofactor">
    <cofactor evidence="1">
        <name>FAD</name>
        <dbReference type="ChEBI" id="CHEBI:57692"/>
    </cofactor>
</comment>
<comment type="subunit">
    <text evidence="1">Homodimer. Heterotetramer of two MnmE and two MnmG subunits.</text>
</comment>
<comment type="subcellular location">
    <subcellularLocation>
        <location evidence="1">Cytoplasm</location>
    </subcellularLocation>
</comment>
<comment type="similarity">
    <text evidence="1">Belongs to the MnmG family.</text>
</comment>
<name>MNMG_ALBFT</name>